<protein>
    <recommendedName>
        <fullName evidence="1">Dual-specificity RNA methyltransferase RlmN</fullName>
        <ecNumber evidence="1">2.1.1.192</ecNumber>
    </recommendedName>
    <alternativeName>
        <fullName evidence="1">23S rRNA (adenine(2503)-C(2))-methyltransferase</fullName>
    </alternativeName>
    <alternativeName>
        <fullName evidence="1">23S rRNA m2A2503 methyltransferase</fullName>
    </alternativeName>
    <alternativeName>
        <fullName evidence="1">Ribosomal RNA large subunit methyltransferase N</fullName>
    </alternativeName>
    <alternativeName>
        <fullName evidence="1">tRNA (adenine(37)-C(2))-methyltransferase</fullName>
    </alternativeName>
    <alternativeName>
        <fullName evidence="1">tRNA m2A37 methyltransferase</fullName>
    </alternativeName>
</protein>
<proteinExistence type="inferred from homology"/>
<organism>
    <name type="scientific">Alcanivorax borkumensis (strain ATCC 700651 / DSM 11573 / NCIMB 13689 / SK2)</name>
    <dbReference type="NCBI Taxonomy" id="393595"/>
    <lineage>
        <taxon>Bacteria</taxon>
        <taxon>Pseudomonadati</taxon>
        <taxon>Pseudomonadota</taxon>
        <taxon>Gammaproteobacteria</taxon>
        <taxon>Oceanospirillales</taxon>
        <taxon>Alcanivoracaceae</taxon>
        <taxon>Alcanivorax</taxon>
    </lineage>
</organism>
<name>RLMN_ALCBS</name>
<comment type="function">
    <text evidence="1">Specifically methylates position 2 of adenine 2503 in 23S rRNA and position 2 of adenine 37 in tRNAs. m2A2503 modification seems to play a crucial role in the proofreading step occurring at the peptidyl transferase center and thus would serve to optimize ribosomal fidelity.</text>
</comment>
<comment type="catalytic activity">
    <reaction evidence="1">
        <text>adenosine(2503) in 23S rRNA + 2 reduced [2Fe-2S]-[ferredoxin] + 2 S-adenosyl-L-methionine = 2-methyladenosine(2503) in 23S rRNA + 5'-deoxyadenosine + L-methionine + 2 oxidized [2Fe-2S]-[ferredoxin] + S-adenosyl-L-homocysteine</text>
        <dbReference type="Rhea" id="RHEA:42916"/>
        <dbReference type="Rhea" id="RHEA-COMP:10000"/>
        <dbReference type="Rhea" id="RHEA-COMP:10001"/>
        <dbReference type="Rhea" id="RHEA-COMP:10152"/>
        <dbReference type="Rhea" id="RHEA-COMP:10282"/>
        <dbReference type="ChEBI" id="CHEBI:17319"/>
        <dbReference type="ChEBI" id="CHEBI:33737"/>
        <dbReference type="ChEBI" id="CHEBI:33738"/>
        <dbReference type="ChEBI" id="CHEBI:57844"/>
        <dbReference type="ChEBI" id="CHEBI:57856"/>
        <dbReference type="ChEBI" id="CHEBI:59789"/>
        <dbReference type="ChEBI" id="CHEBI:74411"/>
        <dbReference type="ChEBI" id="CHEBI:74497"/>
        <dbReference type="EC" id="2.1.1.192"/>
    </reaction>
</comment>
<comment type="catalytic activity">
    <reaction evidence="1">
        <text>adenosine(37) in tRNA + 2 reduced [2Fe-2S]-[ferredoxin] + 2 S-adenosyl-L-methionine = 2-methyladenosine(37) in tRNA + 5'-deoxyadenosine + L-methionine + 2 oxidized [2Fe-2S]-[ferredoxin] + S-adenosyl-L-homocysteine</text>
        <dbReference type="Rhea" id="RHEA:43332"/>
        <dbReference type="Rhea" id="RHEA-COMP:10000"/>
        <dbReference type="Rhea" id="RHEA-COMP:10001"/>
        <dbReference type="Rhea" id="RHEA-COMP:10162"/>
        <dbReference type="Rhea" id="RHEA-COMP:10485"/>
        <dbReference type="ChEBI" id="CHEBI:17319"/>
        <dbReference type="ChEBI" id="CHEBI:33737"/>
        <dbReference type="ChEBI" id="CHEBI:33738"/>
        <dbReference type="ChEBI" id="CHEBI:57844"/>
        <dbReference type="ChEBI" id="CHEBI:57856"/>
        <dbReference type="ChEBI" id="CHEBI:59789"/>
        <dbReference type="ChEBI" id="CHEBI:74411"/>
        <dbReference type="ChEBI" id="CHEBI:74497"/>
        <dbReference type="EC" id="2.1.1.192"/>
    </reaction>
</comment>
<comment type="cofactor">
    <cofactor evidence="1">
        <name>[4Fe-4S] cluster</name>
        <dbReference type="ChEBI" id="CHEBI:49883"/>
    </cofactor>
    <text evidence="1">Binds 1 [4Fe-4S] cluster. The cluster is coordinated with 3 cysteines and an exchangeable S-adenosyl-L-methionine.</text>
</comment>
<comment type="subcellular location">
    <subcellularLocation>
        <location evidence="1">Cytoplasm</location>
    </subcellularLocation>
</comment>
<comment type="miscellaneous">
    <text evidence="1">Reaction proceeds by a ping-pong mechanism involving intermediate methylation of a conserved cysteine residue.</text>
</comment>
<comment type="similarity">
    <text evidence="1">Belongs to the radical SAM superfamily. RlmN family.</text>
</comment>
<evidence type="ECO:0000255" key="1">
    <source>
        <dbReference type="HAMAP-Rule" id="MF_01849"/>
    </source>
</evidence>
<evidence type="ECO:0000255" key="2">
    <source>
        <dbReference type="PROSITE-ProRule" id="PRU01266"/>
    </source>
</evidence>
<accession>Q0VND7</accession>
<reference key="1">
    <citation type="journal article" date="2006" name="Nat. Biotechnol.">
        <title>Genome sequence of the ubiquitous hydrocarbon-degrading marine bacterium Alcanivorax borkumensis.</title>
        <authorList>
            <person name="Schneiker S."/>
            <person name="Martins dos Santos V.A.P."/>
            <person name="Bartels D."/>
            <person name="Bekel T."/>
            <person name="Brecht M."/>
            <person name="Buhrmester J."/>
            <person name="Chernikova T.N."/>
            <person name="Denaro R."/>
            <person name="Ferrer M."/>
            <person name="Gertler C."/>
            <person name="Goesmann A."/>
            <person name="Golyshina O.V."/>
            <person name="Kaminski F."/>
            <person name="Khachane A.N."/>
            <person name="Lang S."/>
            <person name="Linke B."/>
            <person name="McHardy A.C."/>
            <person name="Meyer F."/>
            <person name="Nechitaylo T."/>
            <person name="Puehler A."/>
            <person name="Regenhardt D."/>
            <person name="Rupp O."/>
            <person name="Sabirova J.S."/>
            <person name="Selbitschka W."/>
            <person name="Yakimov M.M."/>
            <person name="Timmis K.N."/>
            <person name="Vorhoelter F.-J."/>
            <person name="Weidner S."/>
            <person name="Kaiser O."/>
            <person name="Golyshin P.N."/>
        </authorList>
    </citation>
    <scope>NUCLEOTIDE SEQUENCE [LARGE SCALE GENOMIC DNA]</scope>
    <source>
        <strain>ATCC 700651 / DSM 11573 / NCIMB 13689 / SK2</strain>
    </source>
</reference>
<feature type="chain" id="PRO_0000350008" description="Dual-specificity RNA methyltransferase RlmN">
    <location>
        <begin position="1"/>
        <end position="381"/>
    </location>
</feature>
<feature type="domain" description="Radical SAM core" evidence="2">
    <location>
        <begin position="101"/>
        <end position="339"/>
    </location>
</feature>
<feature type="active site" description="Proton acceptor" evidence="1">
    <location>
        <position position="95"/>
    </location>
</feature>
<feature type="active site" description="S-methylcysteine intermediate" evidence="1">
    <location>
        <position position="345"/>
    </location>
</feature>
<feature type="binding site" evidence="1">
    <location>
        <position position="115"/>
    </location>
    <ligand>
        <name>[4Fe-4S] cluster</name>
        <dbReference type="ChEBI" id="CHEBI:49883"/>
        <note>4Fe-4S-S-AdoMet</note>
    </ligand>
</feature>
<feature type="binding site" evidence="1">
    <location>
        <position position="119"/>
    </location>
    <ligand>
        <name>[4Fe-4S] cluster</name>
        <dbReference type="ChEBI" id="CHEBI:49883"/>
        <note>4Fe-4S-S-AdoMet</note>
    </ligand>
</feature>
<feature type="binding site" evidence="1">
    <location>
        <position position="122"/>
    </location>
    <ligand>
        <name>[4Fe-4S] cluster</name>
        <dbReference type="ChEBI" id="CHEBI:49883"/>
        <note>4Fe-4S-S-AdoMet</note>
    </ligand>
</feature>
<feature type="binding site" evidence="1">
    <location>
        <begin position="169"/>
        <end position="170"/>
    </location>
    <ligand>
        <name>S-adenosyl-L-methionine</name>
        <dbReference type="ChEBI" id="CHEBI:59789"/>
    </ligand>
</feature>
<feature type="binding site" evidence="1">
    <location>
        <position position="201"/>
    </location>
    <ligand>
        <name>S-adenosyl-L-methionine</name>
        <dbReference type="ChEBI" id="CHEBI:59789"/>
    </ligand>
</feature>
<feature type="binding site" evidence="1">
    <location>
        <begin position="223"/>
        <end position="225"/>
    </location>
    <ligand>
        <name>S-adenosyl-L-methionine</name>
        <dbReference type="ChEBI" id="CHEBI:59789"/>
    </ligand>
</feature>
<feature type="binding site" evidence="1">
    <location>
        <position position="302"/>
    </location>
    <ligand>
        <name>S-adenosyl-L-methionine</name>
        <dbReference type="ChEBI" id="CHEBI:59789"/>
    </ligand>
</feature>
<feature type="disulfide bond" description="(transient)" evidence="1">
    <location>
        <begin position="108"/>
        <end position="345"/>
    </location>
</feature>
<dbReference type="EC" id="2.1.1.192" evidence="1"/>
<dbReference type="EMBL" id="AM286690">
    <property type="protein sequence ID" value="CAL17311.1"/>
    <property type="molecule type" value="Genomic_DNA"/>
</dbReference>
<dbReference type="RefSeq" id="WP_011589142.1">
    <property type="nucleotide sequence ID" value="NC_008260.1"/>
</dbReference>
<dbReference type="SMR" id="Q0VND7"/>
<dbReference type="STRING" id="393595.ABO_1863"/>
<dbReference type="KEGG" id="abo:ABO_1863"/>
<dbReference type="eggNOG" id="COG0820">
    <property type="taxonomic scope" value="Bacteria"/>
</dbReference>
<dbReference type="HOGENOM" id="CLU_029101_0_0_6"/>
<dbReference type="OrthoDB" id="9793973at2"/>
<dbReference type="Proteomes" id="UP000008871">
    <property type="component" value="Chromosome"/>
</dbReference>
<dbReference type="GO" id="GO:0005737">
    <property type="term" value="C:cytoplasm"/>
    <property type="evidence" value="ECO:0007669"/>
    <property type="project" value="UniProtKB-SubCell"/>
</dbReference>
<dbReference type="GO" id="GO:0051539">
    <property type="term" value="F:4 iron, 4 sulfur cluster binding"/>
    <property type="evidence" value="ECO:0007669"/>
    <property type="project" value="UniProtKB-UniRule"/>
</dbReference>
<dbReference type="GO" id="GO:0046872">
    <property type="term" value="F:metal ion binding"/>
    <property type="evidence" value="ECO:0007669"/>
    <property type="project" value="UniProtKB-KW"/>
</dbReference>
<dbReference type="GO" id="GO:0070040">
    <property type="term" value="F:rRNA (adenine(2503)-C2-)-methyltransferase activity"/>
    <property type="evidence" value="ECO:0007669"/>
    <property type="project" value="UniProtKB-UniRule"/>
</dbReference>
<dbReference type="GO" id="GO:0019843">
    <property type="term" value="F:rRNA binding"/>
    <property type="evidence" value="ECO:0007669"/>
    <property type="project" value="UniProtKB-UniRule"/>
</dbReference>
<dbReference type="GO" id="GO:0002935">
    <property type="term" value="F:tRNA (adenine(37)-C2)-methyltransferase activity"/>
    <property type="evidence" value="ECO:0007669"/>
    <property type="project" value="UniProtKB-UniRule"/>
</dbReference>
<dbReference type="GO" id="GO:0000049">
    <property type="term" value="F:tRNA binding"/>
    <property type="evidence" value="ECO:0007669"/>
    <property type="project" value="UniProtKB-UniRule"/>
</dbReference>
<dbReference type="GO" id="GO:0070475">
    <property type="term" value="P:rRNA base methylation"/>
    <property type="evidence" value="ECO:0007669"/>
    <property type="project" value="UniProtKB-UniRule"/>
</dbReference>
<dbReference type="GO" id="GO:0030488">
    <property type="term" value="P:tRNA methylation"/>
    <property type="evidence" value="ECO:0007669"/>
    <property type="project" value="UniProtKB-UniRule"/>
</dbReference>
<dbReference type="CDD" id="cd01335">
    <property type="entry name" value="Radical_SAM"/>
    <property type="match status" value="1"/>
</dbReference>
<dbReference type="FunFam" id="1.10.150.530:FF:000003">
    <property type="entry name" value="Dual-specificity RNA methyltransferase RlmN"/>
    <property type="match status" value="1"/>
</dbReference>
<dbReference type="FunFam" id="3.20.20.70:FF:000008">
    <property type="entry name" value="Dual-specificity RNA methyltransferase RlmN"/>
    <property type="match status" value="1"/>
</dbReference>
<dbReference type="Gene3D" id="1.10.150.530">
    <property type="match status" value="1"/>
</dbReference>
<dbReference type="Gene3D" id="3.20.20.70">
    <property type="entry name" value="Aldolase class I"/>
    <property type="match status" value="1"/>
</dbReference>
<dbReference type="HAMAP" id="MF_01849">
    <property type="entry name" value="RNA_methyltr_RlmN"/>
    <property type="match status" value="1"/>
</dbReference>
<dbReference type="InterPro" id="IPR013785">
    <property type="entry name" value="Aldolase_TIM"/>
</dbReference>
<dbReference type="InterPro" id="IPR040072">
    <property type="entry name" value="Methyltransferase_A"/>
</dbReference>
<dbReference type="InterPro" id="IPR048641">
    <property type="entry name" value="RlmN_N"/>
</dbReference>
<dbReference type="InterPro" id="IPR027492">
    <property type="entry name" value="RNA_MTrfase_RlmN"/>
</dbReference>
<dbReference type="InterPro" id="IPR004383">
    <property type="entry name" value="rRNA_lsu_MTrfase_RlmN/Cfr"/>
</dbReference>
<dbReference type="InterPro" id="IPR007197">
    <property type="entry name" value="rSAM"/>
</dbReference>
<dbReference type="NCBIfam" id="TIGR00048">
    <property type="entry name" value="rRNA_mod_RlmN"/>
    <property type="match status" value="1"/>
</dbReference>
<dbReference type="PANTHER" id="PTHR30544">
    <property type="entry name" value="23S RRNA METHYLTRANSFERASE"/>
    <property type="match status" value="1"/>
</dbReference>
<dbReference type="PANTHER" id="PTHR30544:SF5">
    <property type="entry name" value="RADICAL SAM CORE DOMAIN-CONTAINING PROTEIN"/>
    <property type="match status" value="1"/>
</dbReference>
<dbReference type="Pfam" id="PF04055">
    <property type="entry name" value="Radical_SAM"/>
    <property type="match status" value="1"/>
</dbReference>
<dbReference type="Pfam" id="PF21016">
    <property type="entry name" value="RlmN_N"/>
    <property type="match status" value="1"/>
</dbReference>
<dbReference type="PIRSF" id="PIRSF006004">
    <property type="entry name" value="CHP00048"/>
    <property type="match status" value="1"/>
</dbReference>
<dbReference type="SFLD" id="SFLDF00275">
    <property type="entry name" value="adenosine_C2_methyltransferase"/>
    <property type="match status" value="1"/>
</dbReference>
<dbReference type="SFLD" id="SFLDS00029">
    <property type="entry name" value="Radical_SAM"/>
    <property type="match status" value="1"/>
</dbReference>
<dbReference type="SUPFAM" id="SSF102114">
    <property type="entry name" value="Radical SAM enzymes"/>
    <property type="match status" value="1"/>
</dbReference>
<dbReference type="PROSITE" id="PS51918">
    <property type="entry name" value="RADICAL_SAM"/>
    <property type="match status" value="1"/>
</dbReference>
<keyword id="KW-0004">4Fe-4S</keyword>
<keyword id="KW-0963">Cytoplasm</keyword>
<keyword id="KW-1015">Disulfide bond</keyword>
<keyword id="KW-0408">Iron</keyword>
<keyword id="KW-0411">Iron-sulfur</keyword>
<keyword id="KW-0479">Metal-binding</keyword>
<keyword id="KW-0489">Methyltransferase</keyword>
<keyword id="KW-1185">Reference proteome</keyword>
<keyword id="KW-0698">rRNA processing</keyword>
<keyword id="KW-0949">S-adenosyl-L-methionine</keyword>
<keyword id="KW-0808">Transferase</keyword>
<keyword id="KW-0819">tRNA processing</keyword>
<gene>
    <name evidence="1" type="primary">rlmN</name>
    <name type="ordered locus">ABO_1863</name>
</gene>
<sequence>MTAQQKVNLLGLSRPQMEEFFLTMGEKKFRAQQVLKWIHHHQADSFEQMTDVGKALRQKLSEVAEIRGPKVTHESISRDGTRKWVFEMDNGGAVETVFIPDGRRGTLCVSSQVGCAVDCSFCSTGKQGFQRDMTSAEIIGQVWQASRAFGPRRNLGQHPITNVVMMGMGEPLLNYDKVLTAMRIMKDDLGYGIGKKRITVSTSGVIPKMNQLSEDLDVSLAVSLHAPNDELRNQLVPLNRKYPLKDLMAACKRYSKNITHRHNTITMEYVMLRDVNDKPEHARQLVKLLNGIPVKVNLIPFNPFPHAGYERSRKNDILEFHKYLNDNGVMTTVRTTRGDDIDAACGQLVGQVKDRTRRSERWKESIFHRTEQTDDNTAQTQ</sequence>